<sequence>MGPLSRDAWAQRLGAFRASPSAFMAGPEGEDLGRDLLSDLRSEKLSEQTKVSLLALSMEYPAQLWPDASAAEVAATSLLDTLVLLPPRPSALRRPLLLAATTALAAGGALGPTSGASCRLLPLLLGLAAGSDLGRGFVPASEQRPLQATACECLRELESCKPGLLGGSLGLLRGLLGQEGPVQPLSLLLALALRNTLVLQSRVGAGLGGLLTDKVSPTGGGPWDWTLVEEGDGRLQPQAPSWPAAEEGEGERSLTAREHSPEEARELRAAVIQLLDTSYLLTPVAQAQLLWLLGWALRGLQGQPPALFKPQLVRLLGTAQLTLLHAMLALKAAFGEALFTAQDEALLLRRLTLAAQHPALPPPTHLFYLHCVLSFPENWPLGPEGEEAAPLLLGPQLCRGLLPSLLHDPMALLARLHLLCLLCAEEEEEEKGQLPSPRHYLEELLAGLRQRAALDGGPRALATLCFQASYLVACCLAGQPTVLTPLIHGLAQLYQARPMLAPHFVDLLDQVDSELREPLKVVLRQVVVSRPGRDEALCWHLQMLAKVADGDAQSATLNFLQAAAAHCTNWDLQQGLLRVCRALLRAGVRGGLVDLLQVLARQLEDPDGRDHARLYYILLAHLAAPKLGVALGPSLAAPALASSLVAENQGFVAALMVQEAPALVRLSLGSHRVKGPLPVLKLQPEALEPIYSLELRFRVEGQLYAPLEAVHVPCLCPGRPARPLLLPLQPRCPAPARLDVHALYTTSTGLTCHAHLPPLFVNFADLFLPFPQPPEGAGLGFFEELWDSCLPEGAESRVWCPLGPQGLEGLVSRHLEPFVVVAQPPTSYCVAIHLPPDSKLLLRLEAALADGVPVALRTDDWAVLPLAGDYLRGLAAAV</sequence>
<reference key="1">
    <citation type="journal article" date="2011" name="PLoS Biol.">
        <title>The fifth adaptor protein complex.</title>
        <authorList>
            <person name="Hirst J."/>
            <person name="Barlow L.D."/>
            <person name="Francisco G.C."/>
            <person name="Sahlender D.A."/>
            <person name="Seaman M.N."/>
            <person name="Dacks J.B."/>
            <person name="Robinson M.S."/>
        </authorList>
    </citation>
    <scope>NUCLEOTIDE SEQUENCE [MRNA]</scope>
    <scope>FUNCTION IN ENDOSOME TRANSPORT</scope>
    <scope>IDENTIFICATION AS PART OF AP-5</scope>
    <scope>INTERACTION WITH AP5M1 AND AP5S1</scope>
</reference>
<reference key="2">
    <citation type="journal article" date="2006" name="Nature">
        <title>Human chromosome 11 DNA sequence and analysis including novel gene identification.</title>
        <authorList>
            <person name="Taylor T.D."/>
            <person name="Noguchi H."/>
            <person name="Totoki Y."/>
            <person name="Toyoda A."/>
            <person name="Kuroki Y."/>
            <person name="Dewar K."/>
            <person name="Lloyd C."/>
            <person name="Itoh T."/>
            <person name="Takeda T."/>
            <person name="Kim D.-W."/>
            <person name="She X."/>
            <person name="Barlow K.F."/>
            <person name="Bloom T."/>
            <person name="Bruford E."/>
            <person name="Chang J.L."/>
            <person name="Cuomo C.A."/>
            <person name="Eichler E."/>
            <person name="FitzGerald M.G."/>
            <person name="Jaffe D.B."/>
            <person name="LaButti K."/>
            <person name="Nicol R."/>
            <person name="Park H.-S."/>
            <person name="Seaman C."/>
            <person name="Sougnez C."/>
            <person name="Yang X."/>
            <person name="Zimmer A.R."/>
            <person name="Zody M.C."/>
            <person name="Birren B.W."/>
            <person name="Nusbaum C."/>
            <person name="Fujiyama A."/>
            <person name="Hattori M."/>
            <person name="Rogers J."/>
            <person name="Lander E.S."/>
            <person name="Sakaki Y."/>
        </authorList>
    </citation>
    <scope>NUCLEOTIDE SEQUENCE [LARGE SCALE GENOMIC DNA]</scope>
</reference>
<reference key="3">
    <citation type="submission" date="2005-07" db="EMBL/GenBank/DDBJ databases">
        <authorList>
            <person name="Mural R.J."/>
            <person name="Istrail S."/>
            <person name="Sutton G.G."/>
            <person name="Florea L."/>
            <person name="Halpern A.L."/>
            <person name="Mobarry C.M."/>
            <person name="Lippert R."/>
            <person name="Walenz B."/>
            <person name="Shatkay H."/>
            <person name="Dew I."/>
            <person name="Miller J.R."/>
            <person name="Flanigan M.J."/>
            <person name="Edwards N.J."/>
            <person name="Bolanos R."/>
            <person name="Fasulo D."/>
            <person name="Halldorsson B.V."/>
            <person name="Hannenhalli S."/>
            <person name="Turner R."/>
            <person name="Yooseph S."/>
            <person name="Lu F."/>
            <person name="Nusskern D.R."/>
            <person name="Shue B.C."/>
            <person name="Zheng X.H."/>
            <person name="Zhong F."/>
            <person name="Delcher A.L."/>
            <person name="Huson D.H."/>
            <person name="Kravitz S.A."/>
            <person name="Mouchard L."/>
            <person name="Reinert K."/>
            <person name="Remington K.A."/>
            <person name="Clark A.G."/>
            <person name="Waterman M.S."/>
            <person name="Eichler E.E."/>
            <person name="Adams M.D."/>
            <person name="Hunkapiller M.W."/>
            <person name="Myers E.W."/>
            <person name="Venter J.C."/>
        </authorList>
    </citation>
    <scope>NUCLEOTIDE SEQUENCE [LARGE SCALE GENOMIC DNA]</scope>
</reference>
<reference key="4">
    <citation type="journal article" date="2004" name="Genome Res.">
        <title>The status, quality, and expansion of the NIH full-length cDNA project: the Mammalian Gene Collection (MGC).</title>
        <authorList>
            <consortium name="The MGC Project Team"/>
        </authorList>
    </citation>
    <scope>NUCLEOTIDE SEQUENCE [LARGE SCALE MRNA] OF 157-878</scope>
    <source>
        <tissue>Brain</tissue>
    </source>
</reference>
<reference key="5">
    <citation type="journal article" date="2004" name="Proc. Natl. Acad. Sci. U.S.A.">
        <title>Large-scale cDNA transfection screening for genes related to cancer development and progression.</title>
        <authorList>
            <person name="Wan D."/>
            <person name="Gong Y."/>
            <person name="Qin W."/>
            <person name="Zhang P."/>
            <person name="Li J."/>
            <person name="Wei L."/>
            <person name="Zhou X."/>
            <person name="Li H."/>
            <person name="Qiu X."/>
            <person name="Zhong F."/>
            <person name="He L."/>
            <person name="Yu J."/>
            <person name="Yao G."/>
            <person name="Jiang H."/>
            <person name="Qian L."/>
            <person name="Yu Y."/>
            <person name="Shu H."/>
            <person name="Chen X."/>
            <person name="Xu H."/>
            <person name="Guo M."/>
            <person name="Pan Z."/>
            <person name="Chen Y."/>
            <person name="Ge C."/>
            <person name="Yang S."/>
            <person name="Gu J."/>
        </authorList>
    </citation>
    <scope>NUCLEOTIDE SEQUENCE [LARGE SCALE MRNA] OF 217-878</scope>
</reference>
<reference key="6">
    <citation type="journal article" date="2007" name="BMC Genomics">
        <title>The full-ORF clone resource of the German cDNA consortium.</title>
        <authorList>
            <person name="Bechtel S."/>
            <person name="Rosenfelder H."/>
            <person name="Duda A."/>
            <person name="Schmidt C.P."/>
            <person name="Ernst U."/>
            <person name="Wellenreuther R."/>
            <person name="Mehrle A."/>
            <person name="Schuster C."/>
            <person name="Bahr A."/>
            <person name="Bloecker H."/>
            <person name="Heubner D."/>
            <person name="Hoerlein A."/>
            <person name="Michel G."/>
            <person name="Wedler H."/>
            <person name="Koehrer K."/>
            <person name="Ottenwaelder B."/>
            <person name="Poustka A."/>
            <person name="Wiemann S."/>
            <person name="Schupp I."/>
        </authorList>
    </citation>
    <scope>NUCLEOTIDE SEQUENCE [LARGE SCALE MRNA] OF 369-821</scope>
</reference>
<reference key="7">
    <citation type="journal article" date="2010" name="PLoS Biol.">
        <title>A genome-scale DNA repair RNAi screen identifies SPG48 as a novel gene associated with hereditary spastic paraplegia.</title>
        <authorList>
            <person name="Slabicki M."/>
            <person name="Theis M."/>
            <person name="Krastev D.B."/>
            <person name="Samsonov S."/>
            <person name="Mundwiller E."/>
            <person name="Junqueira M."/>
            <person name="Paszkowski-Rogacz M."/>
            <person name="Teyra J."/>
            <person name="Heninger A.K."/>
            <person name="Poser I."/>
            <person name="Prieur F."/>
            <person name="Truchetto J."/>
            <person name="Confavreux C."/>
            <person name="Marelli C."/>
            <person name="Durr A."/>
            <person name="Camdessanche J.P."/>
            <person name="Brice A."/>
            <person name="Shevchenko A."/>
            <person name="Pisabarro M.T."/>
            <person name="Stevanin G."/>
            <person name="Buchholz F."/>
        </authorList>
    </citation>
    <scope>INTERACTION WITH AP5S1; AP5Z1; SPG11 AND ZFYVE26</scope>
</reference>
<organism>
    <name type="scientific">Homo sapiens</name>
    <name type="common">Human</name>
    <dbReference type="NCBI Taxonomy" id="9606"/>
    <lineage>
        <taxon>Eukaryota</taxon>
        <taxon>Metazoa</taxon>
        <taxon>Chordata</taxon>
        <taxon>Craniata</taxon>
        <taxon>Vertebrata</taxon>
        <taxon>Euteleostomi</taxon>
        <taxon>Mammalia</taxon>
        <taxon>Eutheria</taxon>
        <taxon>Euarchontoglires</taxon>
        <taxon>Primates</taxon>
        <taxon>Haplorrhini</taxon>
        <taxon>Catarrhini</taxon>
        <taxon>Hominidae</taxon>
        <taxon>Homo</taxon>
    </lineage>
</organism>
<comment type="function">
    <text evidence="3">As part of AP-5, a probable fifth adaptor protein complex it may be involved in endosomal transport.</text>
</comment>
<comment type="subunit">
    <text evidence="2 3">Probably part of the adaptor protein complex 5 (AP-5), a tetramer composed of AP5B1, AP5M1, AP5S1 and AP5Z1. Interacts with ZFYVE26 and SPG11.</text>
</comment>
<comment type="interaction">
    <interactant intactId="EBI-5917279">
        <id>Q2VPB7</id>
    </interactant>
    <interactant intactId="EBI-15949594">
        <id>Q9H0R1-1</id>
        <label>AP5M1</label>
    </interactant>
    <organismsDiffer>false</organismsDiffer>
    <experiments>2</experiments>
</comment>
<comment type="interaction">
    <interactant intactId="EBI-5917279">
        <id>Q2VPB7</id>
    </interactant>
    <interactant intactId="EBI-1058722">
        <id>Q13554</id>
        <label>CAMK2B</label>
    </interactant>
    <organismsDiffer>false</organismsDiffer>
    <experiments>4</experiments>
</comment>
<comment type="interaction">
    <interactant intactId="EBI-5917279">
        <id>Q2VPB7</id>
    </interactant>
    <interactant intactId="EBI-740897">
        <id>Q9GZT8</id>
        <label>NIF3L1</label>
    </interactant>
    <organismsDiffer>false</organismsDiffer>
    <experiments>3</experiments>
</comment>
<comment type="sequence caution" evidence="4">
    <conflict type="miscellaneous discrepancy">
        <sequence resource="EMBL-CDS" id="AAG22468"/>
    </conflict>
    <text>Sequencing errors.</text>
</comment>
<comment type="sequence caution" evidence="4">
    <conflict type="erroneous initiation">
        <sequence resource="EMBL-CDS" id="AAI09110"/>
    </conflict>
    <text>Truncated N-terminus.</text>
</comment>
<comment type="sequence caution" evidence="4">
    <conflict type="erroneous initiation">
        <sequence resource="EMBL-CDS" id="AAI09111"/>
    </conflict>
    <text>Truncated N-terminus.</text>
</comment>
<comment type="sequence caution" evidence="4">
    <conflict type="erroneous initiation">
        <sequence resource="EMBL-CDS" id="AAI26906"/>
    </conflict>
    <text>Truncated N-terminus.</text>
</comment>
<comment type="sequence caution" evidence="4">
    <conflict type="erroneous initiation">
        <sequence resource="EMBL-CDS" id="AAI28057"/>
    </conflict>
    <text>Truncated N-terminus.</text>
</comment>
<comment type="sequence caution" evidence="4">
    <conflict type="erroneous gene model prediction">
        <sequence resource="EMBL-CDS" id="EAW74438"/>
    </conflict>
</comment>
<feature type="chain" id="PRO_0000405404" description="AP-5 complex subunit beta-1">
    <location>
        <begin position="1"/>
        <end position="878"/>
    </location>
</feature>
<feature type="region of interest" description="Disordered" evidence="1">
    <location>
        <begin position="234"/>
        <end position="260"/>
    </location>
</feature>
<feature type="compositionally biased region" description="Basic and acidic residues" evidence="1">
    <location>
        <begin position="250"/>
        <end position="260"/>
    </location>
</feature>
<feature type="sequence conflict" description="In Ref. 6; CAD38944." evidence="4" ref="6">
    <original>S</original>
    <variation>P</variation>
    <location>
        <position position="529"/>
    </location>
</feature>
<evidence type="ECO:0000256" key="1">
    <source>
        <dbReference type="SAM" id="MobiDB-lite"/>
    </source>
</evidence>
<evidence type="ECO:0000269" key="2">
    <source>
    </source>
</evidence>
<evidence type="ECO:0000269" key="3">
    <source>
    </source>
</evidence>
<evidence type="ECO:0000305" key="4"/>
<accession>Q2VPB7</accession>
<accession>A1L0S6</accession>
<accession>H6WUK2</accession>
<accession>Q0D2Q2</accession>
<accession>Q8N3J7</accession>
<accession>Q8WYH6</accession>
<keyword id="KW-0653">Protein transport</keyword>
<keyword id="KW-1267">Proteomics identification</keyword>
<keyword id="KW-1185">Reference proteome</keyword>
<keyword id="KW-0813">Transport</keyword>
<gene>
    <name type="primary">AP5B1</name>
    <name type="ORF">PP1030</name>
</gene>
<proteinExistence type="evidence at protein level"/>
<dbReference type="EMBL" id="JQ313135">
    <property type="protein sequence ID" value="AFA36464.1"/>
    <property type="molecule type" value="mRNA"/>
</dbReference>
<dbReference type="EMBL" id="AP001266">
    <property type="status" value="NOT_ANNOTATED_CDS"/>
    <property type="molecule type" value="Genomic_DNA"/>
</dbReference>
<dbReference type="EMBL" id="CH471076">
    <property type="protein sequence ID" value="EAW74438.1"/>
    <property type="status" value="ALT_SEQ"/>
    <property type="molecule type" value="Genomic_DNA"/>
</dbReference>
<dbReference type="EMBL" id="BC004895">
    <property type="protein sequence ID" value="AAH04895.2"/>
    <property type="molecule type" value="mRNA"/>
</dbReference>
<dbReference type="EMBL" id="BC109109">
    <property type="protein sequence ID" value="AAI09110.2"/>
    <property type="status" value="ALT_INIT"/>
    <property type="molecule type" value="mRNA"/>
</dbReference>
<dbReference type="EMBL" id="BC109110">
    <property type="protein sequence ID" value="AAI09111.2"/>
    <property type="status" value="ALT_INIT"/>
    <property type="molecule type" value="mRNA"/>
</dbReference>
<dbReference type="EMBL" id="BC126905">
    <property type="protein sequence ID" value="AAI26906.1"/>
    <property type="status" value="ALT_INIT"/>
    <property type="molecule type" value="mRNA"/>
</dbReference>
<dbReference type="EMBL" id="BC128056">
    <property type="protein sequence ID" value="AAI28057.1"/>
    <property type="status" value="ALT_INIT"/>
    <property type="molecule type" value="mRNA"/>
</dbReference>
<dbReference type="EMBL" id="AL834269">
    <property type="protein sequence ID" value="CAD38944.1"/>
    <property type="molecule type" value="mRNA"/>
</dbReference>
<dbReference type="EMBL" id="AF193040">
    <property type="protein sequence ID" value="AAG22468.1"/>
    <property type="status" value="ALT_SEQ"/>
    <property type="molecule type" value="mRNA"/>
</dbReference>
<dbReference type="CCDS" id="CCDS58146.1"/>
<dbReference type="RefSeq" id="NP_612377.4">
    <property type="nucleotide sequence ID" value="NM_138368.4"/>
</dbReference>
<dbReference type="BioGRID" id="124791">
    <property type="interactions" value="49"/>
</dbReference>
<dbReference type="ComplexPortal" id="CPX-5181">
    <property type="entry name" value="AP-5 Adaptor complex"/>
</dbReference>
<dbReference type="CORUM" id="Q2VPB7"/>
<dbReference type="DIP" id="DIP-60181N"/>
<dbReference type="FunCoup" id="Q2VPB7">
    <property type="interactions" value="183"/>
</dbReference>
<dbReference type="IntAct" id="Q2VPB7">
    <property type="interactions" value="27"/>
</dbReference>
<dbReference type="MINT" id="Q2VPB7"/>
<dbReference type="STRING" id="9606.ENSP00000454303"/>
<dbReference type="GlyGen" id="Q2VPB7">
    <property type="glycosylation" value="2 sites"/>
</dbReference>
<dbReference type="iPTMnet" id="Q2VPB7"/>
<dbReference type="PhosphoSitePlus" id="Q2VPB7"/>
<dbReference type="BioMuta" id="AP5B1"/>
<dbReference type="DMDM" id="374095511"/>
<dbReference type="jPOST" id="Q2VPB7"/>
<dbReference type="MassIVE" id="Q2VPB7"/>
<dbReference type="PaxDb" id="9606-ENSP00000454303"/>
<dbReference type="PeptideAtlas" id="Q2VPB7"/>
<dbReference type="ProteomicsDB" id="61517"/>
<dbReference type="Pumba" id="Q2VPB7"/>
<dbReference type="Antibodypedia" id="70575">
    <property type="antibodies" value="10 antibodies from 6 providers"/>
</dbReference>
<dbReference type="DNASU" id="91056"/>
<dbReference type="Ensembl" id="ENST00000532090.3">
    <property type="protein sequence ID" value="ENSP00000454303.1"/>
    <property type="gene ID" value="ENSG00000254470.3"/>
</dbReference>
<dbReference type="GeneID" id="91056"/>
<dbReference type="KEGG" id="hsa:91056"/>
<dbReference type="MANE-Select" id="ENST00000532090.3">
    <property type="protein sequence ID" value="ENSP00000454303.1"/>
    <property type="RefSeq nucleotide sequence ID" value="NM_138368.5"/>
    <property type="RefSeq protein sequence ID" value="NP_612377.4"/>
</dbReference>
<dbReference type="UCSC" id="uc031qbm.2">
    <property type="organism name" value="human"/>
</dbReference>
<dbReference type="AGR" id="HGNC:25104"/>
<dbReference type="CTD" id="91056"/>
<dbReference type="DisGeNET" id="91056"/>
<dbReference type="GeneCards" id="AP5B1"/>
<dbReference type="HGNC" id="HGNC:25104">
    <property type="gene designation" value="AP5B1"/>
</dbReference>
<dbReference type="HPA" id="ENSG00000254470">
    <property type="expression patterns" value="Tissue enriched (bone)"/>
</dbReference>
<dbReference type="MIM" id="614367">
    <property type="type" value="gene"/>
</dbReference>
<dbReference type="neXtProt" id="NX_Q2VPB7"/>
<dbReference type="OpenTargets" id="ENSG00000254470"/>
<dbReference type="VEuPathDB" id="HostDB:ENSG00000254470"/>
<dbReference type="eggNOG" id="ENOG502QVTX">
    <property type="taxonomic scope" value="Eukaryota"/>
</dbReference>
<dbReference type="GeneTree" id="ENSGT00530000064721"/>
<dbReference type="HOGENOM" id="CLU_014176_0_0_1"/>
<dbReference type="InParanoid" id="Q2VPB7"/>
<dbReference type="OMA" id="SHHLEPF"/>
<dbReference type="OrthoDB" id="646197at2759"/>
<dbReference type="PAN-GO" id="Q2VPB7">
    <property type="GO annotations" value="2 GO annotations based on evolutionary models"/>
</dbReference>
<dbReference type="PhylomeDB" id="Q2VPB7"/>
<dbReference type="TreeFam" id="TF332158"/>
<dbReference type="PathwayCommons" id="Q2VPB7"/>
<dbReference type="SignaLink" id="Q2VPB7"/>
<dbReference type="BioGRID-ORCS" id="91056">
    <property type="hits" value="14 hits in 1162 CRISPR screens"/>
</dbReference>
<dbReference type="ChiTaRS" id="AP5B1">
    <property type="organism name" value="human"/>
</dbReference>
<dbReference type="GenomeRNAi" id="91056"/>
<dbReference type="Pharos" id="Q2VPB7">
    <property type="development level" value="Tdark"/>
</dbReference>
<dbReference type="PRO" id="PR:Q2VPB7"/>
<dbReference type="Proteomes" id="UP000005640">
    <property type="component" value="Chromosome 11"/>
</dbReference>
<dbReference type="RNAct" id="Q2VPB7">
    <property type="molecule type" value="protein"/>
</dbReference>
<dbReference type="Bgee" id="ENSG00000254470">
    <property type="expression patterns" value="Expressed in monocyte and 114 other cell types or tissues"/>
</dbReference>
<dbReference type="GO" id="GO:0044599">
    <property type="term" value="C:AP-5 adaptor complex"/>
    <property type="evidence" value="ECO:0000303"/>
    <property type="project" value="ComplexPortal"/>
</dbReference>
<dbReference type="GO" id="GO:0030119">
    <property type="term" value="C:AP-type membrane coat adaptor complex"/>
    <property type="evidence" value="ECO:0000314"/>
    <property type="project" value="UniProtKB"/>
</dbReference>
<dbReference type="GO" id="GO:0005770">
    <property type="term" value="C:late endosome"/>
    <property type="evidence" value="ECO:0000303"/>
    <property type="project" value="ComplexPortal"/>
</dbReference>
<dbReference type="GO" id="GO:0005765">
    <property type="term" value="C:lysosomal membrane"/>
    <property type="evidence" value="ECO:0007005"/>
    <property type="project" value="UniProtKB"/>
</dbReference>
<dbReference type="GO" id="GO:0016197">
    <property type="term" value="P:endosomal transport"/>
    <property type="evidence" value="ECO:0000315"/>
    <property type="project" value="UniProtKB"/>
</dbReference>
<dbReference type="GO" id="GO:0015031">
    <property type="term" value="P:protein transport"/>
    <property type="evidence" value="ECO:0007669"/>
    <property type="project" value="UniProtKB-KW"/>
</dbReference>
<dbReference type="GO" id="GO:0016192">
    <property type="term" value="P:vesicle-mediated transport"/>
    <property type="evidence" value="ECO:0000303"/>
    <property type="project" value="ComplexPortal"/>
</dbReference>
<dbReference type="InterPro" id="IPR038741">
    <property type="entry name" value="AP5B1"/>
</dbReference>
<dbReference type="InterPro" id="IPR048980">
    <property type="entry name" value="AP5B1_barrel"/>
</dbReference>
<dbReference type="InterPro" id="IPR048981">
    <property type="entry name" value="AP5B1_C"/>
</dbReference>
<dbReference type="InterPro" id="IPR048979">
    <property type="entry name" value="AP5B1_middle"/>
</dbReference>
<dbReference type="InterPro" id="IPR048978">
    <property type="entry name" value="AP5B1_N"/>
</dbReference>
<dbReference type="PANTHER" id="PTHR34033">
    <property type="entry name" value="AP-5 COMPLEX SUBUNIT BETA-1"/>
    <property type="match status" value="1"/>
</dbReference>
<dbReference type="PANTHER" id="PTHR34033:SF1">
    <property type="entry name" value="AP-5 COMPLEX SUBUNIT BETA-1"/>
    <property type="match status" value="1"/>
</dbReference>
<dbReference type="Pfam" id="PF21589">
    <property type="entry name" value="AP5B1_barrel"/>
    <property type="match status" value="1"/>
</dbReference>
<dbReference type="Pfam" id="PF21590">
    <property type="entry name" value="AP5B1_C"/>
    <property type="match status" value="1"/>
</dbReference>
<dbReference type="Pfam" id="PF21588">
    <property type="entry name" value="AP5B1_middle"/>
    <property type="match status" value="1"/>
</dbReference>
<dbReference type="Pfam" id="PF21587">
    <property type="entry name" value="AP5B1_N"/>
    <property type="match status" value="1"/>
</dbReference>
<protein>
    <recommendedName>
        <fullName>AP-5 complex subunit beta-1</fullName>
    </recommendedName>
    <alternativeName>
        <fullName>Adaptor-related protein complex 5 beta subunit</fullName>
        <shortName>Beta5</shortName>
    </alternativeName>
</protein>
<name>AP5B1_HUMAN</name>